<feature type="chain" id="PRO_0000073448" description="Alpha-actinin-like protein 1">
    <location>
        <begin position="1"/>
        <end position="621"/>
    </location>
</feature>
<feature type="domain" description="Calponin-homology (CH) 1" evidence="1">
    <location>
        <begin position="8"/>
        <end position="114"/>
    </location>
</feature>
<feature type="domain" description="Calponin-homology (CH) 2" evidence="1">
    <location>
        <begin position="123"/>
        <end position="230"/>
    </location>
</feature>
<feature type="domain" description="EF-hand 1">
    <location>
        <begin position="388"/>
        <end position="419"/>
    </location>
</feature>
<feature type="domain" description="EF-hand 2">
    <location>
        <begin position="487"/>
        <end position="549"/>
    </location>
</feature>
<feature type="domain" description="EF-hand 3">
    <location>
        <begin position="550"/>
        <end position="618"/>
    </location>
</feature>
<feature type="region of interest" description="Actin-binding">
    <location>
        <begin position="86"/>
        <end position="110"/>
    </location>
</feature>
<feature type="helix" evidence="4">
    <location>
        <begin position="9"/>
        <end position="23"/>
    </location>
</feature>
<feature type="turn" evidence="4">
    <location>
        <begin position="24"/>
        <end position="26"/>
    </location>
</feature>
<feature type="turn" evidence="4">
    <location>
        <begin position="33"/>
        <end position="39"/>
    </location>
</feature>
<feature type="helix" evidence="4">
    <location>
        <begin position="41"/>
        <end position="51"/>
    </location>
</feature>
<feature type="helix" evidence="4">
    <location>
        <begin position="65"/>
        <end position="81"/>
    </location>
</feature>
<feature type="helix" evidence="4">
    <location>
        <begin position="91"/>
        <end position="95"/>
    </location>
</feature>
<feature type="helix" evidence="4">
    <location>
        <begin position="99"/>
        <end position="114"/>
    </location>
</feature>
<feature type="turn" evidence="4">
    <location>
        <begin position="115"/>
        <end position="117"/>
    </location>
</feature>
<feature type="helix" evidence="4">
    <location>
        <begin position="125"/>
        <end position="136"/>
    </location>
</feature>
<feature type="helix" evidence="4">
    <location>
        <begin position="138"/>
        <end position="140"/>
    </location>
</feature>
<feature type="turn" evidence="4">
    <location>
        <begin position="141"/>
        <end position="143"/>
    </location>
</feature>
<feature type="strand" evidence="4">
    <location>
        <begin position="148"/>
        <end position="150"/>
    </location>
</feature>
<feature type="helix" evidence="4">
    <location>
        <begin position="151"/>
        <end position="153"/>
    </location>
</feature>
<feature type="helix" evidence="4">
    <location>
        <begin position="157"/>
        <end position="166"/>
    </location>
</feature>
<feature type="turn" evidence="4">
    <location>
        <begin position="168"/>
        <end position="170"/>
    </location>
</feature>
<feature type="helix" evidence="4">
    <location>
        <begin position="173"/>
        <end position="175"/>
    </location>
</feature>
<feature type="helix" evidence="4">
    <location>
        <begin position="181"/>
        <end position="196"/>
    </location>
</feature>
<feature type="helix" evidence="4">
    <location>
        <begin position="204"/>
        <end position="207"/>
    </location>
</feature>
<feature type="helix" evidence="4">
    <location>
        <begin position="215"/>
        <end position="232"/>
    </location>
</feature>
<sequence>MQANQWQSVQNRTFTKWFNTKLSSRDLPSVFDLRKDLSDGILLIQLLEIIGDENLGRYNRNPRMRVHRLENVNKALEYIKSKGMPLTNIGPADIVDGNLKLILGLIWTLILRFTIADINEEGLTAKEGLLLWCQRKTANYHPEVDVQDFTRSWTNGLAFCALIHQHRPDLLDYNKLDKKNHRANMQLAFDIAQKSIGIPRLIEVEDVCDVDRPDERSIMTYVAEYFHAFSTLDKVETAARRVERFTEVLMSTHDMKIDYESRMKRLLGSIARMQEYWHTVQFENNYTDVKSHSNNFAKFKATEKREWVKEKIDLESLLGTIQTNLKTYQLRKYEPPAGLKIVDLERQWKDFLSEEANQSKLINTHMREIKESMRIAFADRANSFSKMLSTISNEITNLQGDWRDQLDHVEFLQEHLGPLEVELASVKVLYDNCFQAGIEENDYTMFSYEDLEHEFGITANIIANKIKYLENELLEREKRTLSKQELDGITKVFRHFEKKKSNMLNEVEFYAALASLGLVYDTEEGTALFHRAANSEEGVTYERFTEIVMEELEDRDSARQVLYAFCDVADGKSYVTSDDLLRSQVRPNIVKFLECNMNKHSEGLDYLTWIKQLLAEDKEIV</sequence>
<evidence type="ECO:0000255" key="1">
    <source>
        <dbReference type="PROSITE-ProRule" id="PRU00044"/>
    </source>
</evidence>
<evidence type="ECO:0000269" key="2">
    <source>
    </source>
</evidence>
<evidence type="ECO:0000305" key="3"/>
<evidence type="ECO:0007829" key="4">
    <source>
        <dbReference type="PDB" id="5BVR"/>
    </source>
</evidence>
<comment type="function">
    <text evidence="2">Binds to actin and is involved in actin-ring formation and organization. Plays a role in cytokinesis and is involved in septation.</text>
</comment>
<comment type="subcellular location">
    <subcellularLocation>
        <location evidence="2">Cytoplasm</location>
        <location evidence="2">Cytoskeleton</location>
    </subcellularLocation>
    <text>Localizes to the medial ring in an F-actin-dependent manner.</text>
</comment>
<comment type="similarity">
    <text evidence="3">Belongs to the alpha-actinin family.</text>
</comment>
<accession>O13728</accession>
<proteinExistence type="evidence at protein level"/>
<dbReference type="EMBL" id="CU329670">
    <property type="protein sequence ID" value="CAB10105.1"/>
    <property type="molecule type" value="Genomic_DNA"/>
</dbReference>
<dbReference type="PIR" id="T37708">
    <property type="entry name" value="T37708"/>
</dbReference>
<dbReference type="RefSeq" id="NP_594295.1">
    <property type="nucleotide sequence ID" value="NM_001019718.2"/>
</dbReference>
<dbReference type="PDB" id="5BVR">
    <property type="method" value="X-ray"/>
    <property type="resolution" value="1.46 A"/>
    <property type="chains" value="A=1-234"/>
</dbReference>
<dbReference type="PDBsum" id="5BVR"/>
<dbReference type="SMR" id="O13728"/>
<dbReference type="BioGRID" id="279253">
    <property type="interactions" value="17"/>
</dbReference>
<dbReference type="FunCoup" id="O13728">
    <property type="interactions" value="11"/>
</dbReference>
<dbReference type="STRING" id="284812.O13728"/>
<dbReference type="iPTMnet" id="O13728"/>
<dbReference type="PaxDb" id="4896-SPAC15A10.08.1"/>
<dbReference type="EnsemblFungi" id="SPAC15A10.08.1">
    <property type="protein sequence ID" value="SPAC15A10.08.1:pep"/>
    <property type="gene ID" value="SPAC15A10.08"/>
</dbReference>
<dbReference type="GeneID" id="2542805"/>
<dbReference type="KEGG" id="spo:2542805"/>
<dbReference type="PomBase" id="SPAC15A10.08">
    <property type="gene designation" value="ain1"/>
</dbReference>
<dbReference type="VEuPathDB" id="FungiDB:SPAC15A10.08"/>
<dbReference type="eggNOG" id="KOG0035">
    <property type="taxonomic scope" value="Eukaryota"/>
</dbReference>
<dbReference type="HOGENOM" id="CLU_005217_0_2_1"/>
<dbReference type="InParanoid" id="O13728"/>
<dbReference type="OMA" id="QQRWITV"/>
<dbReference type="PhylomeDB" id="O13728"/>
<dbReference type="Reactome" id="R-SPO-114608">
    <property type="pathway name" value="Platelet degranulation"/>
</dbReference>
<dbReference type="Reactome" id="R-SPO-6798695">
    <property type="pathway name" value="Neutrophil degranulation"/>
</dbReference>
<dbReference type="Reactome" id="R-SPO-6807878">
    <property type="pathway name" value="COPI-mediated anterograde transport"/>
</dbReference>
<dbReference type="Reactome" id="R-SPO-9013405">
    <property type="pathway name" value="RHOD GTPase cycle"/>
</dbReference>
<dbReference type="Reactome" id="R-SPO-9013420">
    <property type="pathway name" value="RHOU GTPase cycle"/>
</dbReference>
<dbReference type="Reactome" id="R-SPO-9013424">
    <property type="pathway name" value="RHOV GTPase cycle"/>
</dbReference>
<dbReference type="PRO" id="PR:O13728"/>
<dbReference type="Proteomes" id="UP000002485">
    <property type="component" value="Chromosome I"/>
</dbReference>
<dbReference type="GO" id="GO:0032432">
    <property type="term" value="C:actin filament bundle"/>
    <property type="evidence" value="ECO:0000314"/>
    <property type="project" value="PomBase"/>
</dbReference>
<dbReference type="GO" id="GO:0005826">
    <property type="term" value="C:actomyosin contractile ring"/>
    <property type="evidence" value="ECO:0000318"/>
    <property type="project" value="GO_Central"/>
</dbReference>
<dbReference type="GO" id="GO:0042995">
    <property type="term" value="C:cell projection"/>
    <property type="evidence" value="ECO:0000318"/>
    <property type="project" value="GO_Central"/>
</dbReference>
<dbReference type="GO" id="GO:0030864">
    <property type="term" value="C:cortical actin cytoskeleton"/>
    <property type="evidence" value="ECO:0000318"/>
    <property type="project" value="GO_Central"/>
</dbReference>
<dbReference type="GO" id="GO:0110085">
    <property type="term" value="C:mitotic actomyosin contractile ring"/>
    <property type="evidence" value="ECO:0000314"/>
    <property type="project" value="PomBase"/>
</dbReference>
<dbReference type="GO" id="GO:0051015">
    <property type="term" value="F:actin filament binding"/>
    <property type="evidence" value="ECO:0000314"/>
    <property type="project" value="PomBase"/>
</dbReference>
<dbReference type="GO" id="GO:0003786">
    <property type="term" value="F:actin lateral binding"/>
    <property type="evidence" value="ECO:0000269"/>
    <property type="project" value="PomBase"/>
</dbReference>
<dbReference type="GO" id="GO:0030674">
    <property type="term" value="F:protein-macromolecule adaptor activity"/>
    <property type="evidence" value="ECO:0000266"/>
    <property type="project" value="PomBase"/>
</dbReference>
<dbReference type="GO" id="GO:0051764">
    <property type="term" value="P:actin crosslink formation"/>
    <property type="evidence" value="ECO:0000314"/>
    <property type="project" value="PomBase"/>
</dbReference>
<dbReference type="GO" id="GO:0030036">
    <property type="term" value="P:actin cytoskeleton organization"/>
    <property type="evidence" value="ECO:0000318"/>
    <property type="project" value="GO_Central"/>
</dbReference>
<dbReference type="GO" id="GO:0051017">
    <property type="term" value="P:actin filament bundle assembly"/>
    <property type="evidence" value="ECO:0000314"/>
    <property type="project" value="PomBase"/>
</dbReference>
<dbReference type="GO" id="GO:0071520">
    <property type="term" value="P:actomyosin contractile ring assembly actin filament bundle convergence"/>
    <property type="evidence" value="ECO:0000315"/>
    <property type="project" value="PomBase"/>
</dbReference>
<dbReference type="CDD" id="cd21215">
    <property type="entry name" value="CH_SpAIN1-like_rpt1"/>
    <property type="match status" value="1"/>
</dbReference>
<dbReference type="CDD" id="cd21291">
    <property type="entry name" value="CH_SpAIN1-like_rpt2"/>
    <property type="match status" value="1"/>
</dbReference>
<dbReference type="FunFam" id="1.10.418.10:FF:000030">
    <property type="entry name" value="Related to alpha-actinin"/>
    <property type="match status" value="1"/>
</dbReference>
<dbReference type="FunFam" id="1.10.418.10:FF:000077">
    <property type="entry name" value="Related to alpha-actinin"/>
    <property type="match status" value="1"/>
</dbReference>
<dbReference type="Gene3D" id="1.20.58.60">
    <property type="match status" value="2"/>
</dbReference>
<dbReference type="Gene3D" id="1.10.418.10">
    <property type="entry name" value="Calponin-like domain"/>
    <property type="match status" value="2"/>
</dbReference>
<dbReference type="Gene3D" id="1.10.238.10">
    <property type="entry name" value="EF-hand"/>
    <property type="match status" value="2"/>
</dbReference>
<dbReference type="InterPro" id="IPR001589">
    <property type="entry name" value="Actinin_actin-bd_CS"/>
</dbReference>
<dbReference type="InterPro" id="IPR001715">
    <property type="entry name" value="CH_dom"/>
</dbReference>
<dbReference type="InterPro" id="IPR036872">
    <property type="entry name" value="CH_dom_sf"/>
</dbReference>
<dbReference type="InterPro" id="IPR011992">
    <property type="entry name" value="EF-hand-dom_pair"/>
</dbReference>
<dbReference type="InterPro" id="IPR014837">
    <property type="entry name" value="EF-hand_Ca_insen"/>
</dbReference>
<dbReference type="PANTHER" id="PTHR11915">
    <property type="entry name" value="SPECTRIN/FILAMIN RELATED CYTOSKELETAL PROTEIN"/>
    <property type="match status" value="1"/>
</dbReference>
<dbReference type="Pfam" id="PF00307">
    <property type="entry name" value="CH"/>
    <property type="match status" value="2"/>
</dbReference>
<dbReference type="Pfam" id="PF08726">
    <property type="entry name" value="EFhand_Ca_insen"/>
    <property type="match status" value="1"/>
</dbReference>
<dbReference type="SMART" id="SM00033">
    <property type="entry name" value="CH"/>
    <property type="match status" value="2"/>
</dbReference>
<dbReference type="SMART" id="SM01184">
    <property type="entry name" value="efhand_Ca_insen"/>
    <property type="match status" value="1"/>
</dbReference>
<dbReference type="SUPFAM" id="SSF47576">
    <property type="entry name" value="Calponin-homology domain, CH-domain"/>
    <property type="match status" value="1"/>
</dbReference>
<dbReference type="SUPFAM" id="SSF47473">
    <property type="entry name" value="EF-hand"/>
    <property type="match status" value="1"/>
</dbReference>
<dbReference type="SUPFAM" id="SSF46966">
    <property type="entry name" value="Spectrin repeat"/>
    <property type="match status" value="1"/>
</dbReference>
<dbReference type="PROSITE" id="PS00020">
    <property type="entry name" value="ACTININ_2"/>
    <property type="match status" value="1"/>
</dbReference>
<dbReference type="PROSITE" id="PS50021">
    <property type="entry name" value="CH"/>
    <property type="match status" value="2"/>
</dbReference>
<keyword id="KW-0002">3D-structure</keyword>
<keyword id="KW-0009">Actin-binding</keyword>
<keyword id="KW-0106">Calcium</keyword>
<keyword id="KW-0963">Cytoplasm</keyword>
<keyword id="KW-0206">Cytoskeleton</keyword>
<keyword id="KW-1185">Reference proteome</keyword>
<keyword id="KW-0677">Repeat</keyword>
<name>AIN1_SCHPO</name>
<reference key="1">
    <citation type="journal article" date="2002" name="Nature">
        <title>The genome sequence of Schizosaccharomyces pombe.</title>
        <authorList>
            <person name="Wood V."/>
            <person name="Gwilliam R."/>
            <person name="Rajandream M.A."/>
            <person name="Lyne M.H."/>
            <person name="Lyne R."/>
            <person name="Stewart A."/>
            <person name="Sgouros J.G."/>
            <person name="Peat N."/>
            <person name="Hayles J."/>
            <person name="Baker S.G."/>
            <person name="Basham D."/>
            <person name="Bowman S."/>
            <person name="Brooks K."/>
            <person name="Brown D."/>
            <person name="Brown S."/>
            <person name="Chillingworth T."/>
            <person name="Churcher C.M."/>
            <person name="Collins M."/>
            <person name="Connor R."/>
            <person name="Cronin A."/>
            <person name="Davis P."/>
            <person name="Feltwell T."/>
            <person name="Fraser A."/>
            <person name="Gentles S."/>
            <person name="Goble A."/>
            <person name="Hamlin N."/>
            <person name="Harris D.E."/>
            <person name="Hidalgo J."/>
            <person name="Hodgson G."/>
            <person name="Holroyd S."/>
            <person name="Hornsby T."/>
            <person name="Howarth S."/>
            <person name="Huckle E.J."/>
            <person name="Hunt S."/>
            <person name="Jagels K."/>
            <person name="James K.D."/>
            <person name="Jones L."/>
            <person name="Jones M."/>
            <person name="Leather S."/>
            <person name="McDonald S."/>
            <person name="McLean J."/>
            <person name="Mooney P."/>
            <person name="Moule S."/>
            <person name="Mungall K.L."/>
            <person name="Murphy L.D."/>
            <person name="Niblett D."/>
            <person name="Odell C."/>
            <person name="Oliver K."/>
            <person name="O'Neil S."/>
            <person name="Pearson D."/>
            <person name="Quail M.A."/>
            <person name="Rabbinowitsch E."/>
            <person name="Rutherford K.M."/>
            <person name="Rutter S."/>
            <person name="Saunders D."/>
            <person name="Seeger K."/>
            <person name="Sharp S."/>
            <person name="Skelton J."/>
            <person name="Simmonds M.N."/>
            <person name="Squares R."/>
            <person name="Squares S."/>
            <person name="Stevens K."/>
            <person name="Taylor K."/>
            <person name="Taylor R.G."/>
            <person name="Tivey A."/>
            <person name="Walsh S.V."/>
            <person name="Warren T."/>
            <person name="Whitehead S."/>
            <person name="Woodward J.R."/>
            <person name="Volckaert G."/>
            <person name="Aert R."/>
            <person name="Robben J."/>
            <person name="Grymonprez B."/>
            <person name="Weltjens I."/>
            <person name="Vanstreels E."/>
            <person name="Rieger M."/>
            <person name="Schaefer M."/>
            <person name="Mueller-Auer S."/>
            <person name="Gabel C."/>
            <person name="Fuchs M."/>
            <person name="Duesterhoeft A."/>
            <person name="Fritzc C."/>
            <person name="Holzer E."/>
            <person name="Moestl D."/>
            <person name="Hilbert H."/>
            <person name="Borzym K."/>
            <person name="Langer I."/>
            <person name="Beck A."/>
            <person name="Lehrach H."/>
            <person name="Reinhardt R."/>
            <person name="Pohl T.M."/>
            <person name="Eger P."/>
            <person name="Zimmermann W."/>
            <person name="Wedler H."/>
            <person name="Wambutt R."/>
            <person name="Purnelle B."/>
            <person name="Goffeau A."/>
            <person name="Cadieu E."/>
            <person name="Dreano S."/>
            <person name="Gloux S."/>
            <person name="Lelaure V."/>
            <person name="Mottier S."/>
            <person name="Galibert F."/>
            <person name="Aves S.J."/>
            <person name="Xiang Z."/>
            <person name="Hunt C."/>
            <person name="Moore K."/>
            <person name="Hurst S.M."/>
            <person name="Lucas M."/>
            <person name="Rochet M."/>
            <person name="Gaillardin C."/>
            <person name="Tallada V.A."/>
            <person name="Garzon A."/>
            <person name="Thode G."/>
            <person name="Daga R.R."/>
            <person name="Cruzado L."/>
            <person name="Jimenez J."/>
            <person name="Sanchez M."/>
            <person name="del Rey F."/>
            <person name="Benito J."/>
            <person name="Dominguez A."/>
            <person name="Revuelta J.L."/>
            <person name="Moreno S."/>
            <person name="Armstrong J."/>
            <person name="Forsburg S.L."/>
            <person name="Cerutti L."/>
            <person name="Lowe T."/>
            <person name="McCombie W.R."/>
            <person name="Paulsen I."/>
            <person name="Potashkin J."/>
            <person name="Shpakovski G.V."/>
            <person name="Ussery D."/>
            <person name="Barrell B.G."/>
            <person name="Nurse P."/>
        </authorList>
    </citation>
    <scope>NUCLEOTIDE SEQUENCE [LARGE SCALE GENOMIC DNA]</scope>
    <source>
        <strain>972 / ATCC 24843</strain>
    </source>
</reference>
<reference key="2">
    <citation type="journal article" date="2001" name="Mol. Biol. Cell">
        <title>Roles of a fimbrin and an alpha-actinin-like protein in fission yeast cell polarization and cytokinesis.</title>
        <authorList>
            <person name="Wu J.-Q."/>
            <person name="Baehler J."/>
            <person name="Pringle J.R."/>
        </authorList>
    </citation>
    <scope>FUNCTION</scope>
    <scope>SUBCELLULAR LOCATION</scope>
    <source>
        <strain>972 / ATCC 24843</strain>
    </source>
</reference>
<protein>
    <recommendedName>
        <fullName>Alpha-actinin-like protein 1</fullName>
    </recommendedName>
</protein>
<organism>
    <name type="scientific">Schizosaccharomyces pombe (strain 972 / ATCC 24843)</name>
    <name type="common">Fission yeast</name>
    <dbReference type="NCBI Taxonomy" id="284812"/>
    <lineage>
        <taxon>Eukaryota</taxon>
        <taxon>Fungi</taxon>
        <taxon>Dikarya</taxon>
        <taxon>Ascomycota</taxon>
        <taxon>Taphrinomycotina</taxon>
        <taxon>Schizosaccharomycetes</taxon>
        <taxon>Schizosaccharomycetales</taxon>
        <taxon>Schizosaccharomycetaceae</taxon>
        <taxon>Schizosaccharomyces</taxon>
    </lineage>
</organism>
<gene>
    <name type="primary">ain1</name>
    <name type="ORF">SPAC15A10.08</name>
</gene>